<proteinExistence type="inferred from homology"/>
<name>RS13_BACP2</name>
<organism>
    <name type="scientific">Bacillus pumilus (strain SAFR-032)</name>
    <dbReference type="NCBI Taxonomy" id="315750"/>
    <lineage>
        <taxon>Bacteria</taxon>
        <taxon>Bacillati</taxon>
        <taxon>Bacillota</taxon>
        <taxon>Bacilli</taxon>
        <taxon>Bacillales</taxon>
        <taxon>Bacillaceae</taxon>
        <taxon>Bacillus</taxon>
    </lineage>
</organism>
<evidence type="ECO:0000255" key="1">
    <source>
        <dbReference type="HAMAP-Rule" id="MF_01315"/>
    </source>
</evidence>
<evidence type="ECO:0000256" key="2">
    <source>
        <dbReference type="SAM" id="MobiDB-lite"/>
    </source>
</evidence>
<evidence type="ECO:0000305" key="3"/>
<keyword id="KW-0687">Ribonucleoprotein</keyword>
<keyword id="KW-0689">Ribosomal protein</keyword>
<keyword id="KW-0694">RNA-binding</keyword>
<keyword id="KW-0699">rRNA-binding</keyword>
<keyword id="KW-0820">tRNA-binding</keyword>
<gene>
    <name evidence="1" type="primary">rpsM</name>
    <name type="ordered locus">BPUM_0128</name>
</gene>
<dbReference type="EMBL" id="CP000813">
    <property type="protein sequence ID" value="ABV60827.1"/>
    <property type="molecule type" value="Genomic_DNA"/>
</dbReference>
<dbReference type="RefSeq" id="WP_003217023.1">
    <property type="nucleotide sequence ID" value="NZ_VEIS01000020.1"/>
</dbReference>
<dbReference type="SMR" id="A8F9B0"/>
<dbReference type="STRING" id="315750.BPUM_0128"/>
<dbReference type="GeneID" id="66361758"/>
<dbReference type="KEGG" id="bpu:BPUM_0128"/>
<dbReference type="eggNOG" id="COG0099">
    <property type="taxonomic scope" value="Bacteria"/>
</dbReference>
<dbReference type="HOGENOM" id="CLU_103849_1_1_9"/>
<dbReference type="OrthoDB" id="9803610at2"/>
<dbReference type="Proteomes" id="UP000001355">
    <property type="component" value="Chromosome"/>
</dbReference>
<dbReference type="GO" id="GO:0005829">
    <property type="term" value="C:cytosol"/>
    <property type="evidence" value="ECO:0007669"/>
    <property type="project" value="TreeGrafter"/>
</dbReference>
<dbReference type="GO" id="GO:0015935">
    <property type="term" value="C:small ribosomal subunit"/>
    <property type="evidence" value="ECO:0007669"/>
    <property type="project" value="TreeGrafter"/>
</dbReference>
<dbReference type="GO" id="GO:0019843">
    <property type="term" value="F:rRNA binding"/>
    <property type="evidence" value="ECO:0007669"/>
    <property type="project" value="UniProtKB-UniRule"/>
</dbReference>
<dbReference type="GO" id="GO:0003735">
    <property type="term" value="F:structural constituent of ribosome"/>
    <property type="evidence" value="ECO:0007669"/>
    <property type="project" value="InterPro"/>
</dbReference>
<dbReference type="GO" id="GO:0000049">
    <property type="term" value="F:tRNA binding"/>
    <property type="evidence" value="ECO:0007669"/>
    <property type="project" value="UniProtKB-UniRule"/>
</dbReference>
<dbReference type="GO" id="GO:0006412">
    <property type="term" value="P:translation"/>
    <property type="evidence" value="ECO:0007669"/>
    <property type="project" value="UniProtKB-UniRule"/>
</dbReference>
<dbReference type="FunFam" id="1.10.8.50:FF:000001">
    <property type="entry name" value="30S ribosomal protein S13"/>
    <property type="match status" value="1"/>
</dbReference>
<dbReference type="FunFam" id="4.10.910.10:FF:000001">
    <property type="entry name" value="30S ribosomal protein S13"/>
    <property type="match status" value="1"/>
</dbReference>
<dbReference type="Gene3D" id="1.10.8.50">
    <property type="match status" value="1"/>
</dbReference>
<dbReference type="Gene3D" id="4.10.910.10">
    <property type="entry name" value="30s ribosomal protein s13, domain 2"/>
    <property type="match status" value="1"/>
</dbReference>
<dbReference type="HAMAP" id="MF_01315">
    <property type="entry name" value="Ribosomal_uS13"/>
    <property type="match status" value="1"/>
</dbReference>
<dbReference type="InterPro" id="IPR027437">
    <property type="entry name" value="Rbsml_uS13_C"/>
</dbReference>
<dbReference type="InterPro" id="IPR001892">
    <property type="entry name" value="Ribosomal_uS13"/>
</dbReference>
<dbReference type="InterPro" id="IPR010979">
    <property type="entry name" value="Ribosomal_uS13-like_H2TH"/>
</dbReference>
<dbReference type="InterPro" id="IPR019980">
    <property type="entry name" value="Ribosomal_uS13_bac-type"/>
</dbReference>
<dbReference type="InterPro" id="IPR018269">
    <property type="entry name" value="Ribosomal_uS13_CS"/>
</dbReference>
<dbReference type="NCBIfam" id="TIGR03631">
    <property type="entry name" value="uS13_bact"/>
    <property type="match status" value="1"/>
</dbReference>
<dbReference type="PANTHER" id="PTHR10871">
    <property type="entry name" value="30S RIBOSOMAL PROTEIN S13/40S RIBOSOMAL PROTEIN S18"/>
    <property type="match status" value="1"/>
</dbReference>
<dbReference type="PANTHER" id="PTHR10871:SF1">
    <property type="entry name" value="SMALL RIBOSOMAL SUBUNIT PROTEIN US13M"/>
    <property type="match status" value="1"/>
</dbReference>
<dbReference type="Pfam" id="PF00416">
    <property type="entry name" value="Ribosomal_S13"/>
    <property type="match status" value="1"/>
</dbReference>
<dbReference type="PIRSF" id="PIRSF002134">
    <property type="entry name" value="Ribosomal_S13"/>
    <property type="match status" value="1"/>
</dbReference>
<dbReference type="SUPFAM" id="SSF46946">
    <property type="entry name" value="S13-like H2TH domain"/>
    <property type="match status" value="1"/>
</dbReference>
<dbReference type="PROSITE" id="PS00646">
    <property type="entry name" value="RIBOSOMAL_S13_1"/>
    <property type="match status" value="1"/>
</dbReference>
<dbReference type="PROSITE" id="PS50159">
    <property type="entry name" value="RIBOSOMAL_S13_2"/>
    <property type="match status" value="1"/>
</dbReference>
<reference key="1">
    <citation type="journal article" date="2007" name="PLoS ONE">
        <title>Paradoxical DNA repair and peroxide resistance gene conservation in Bacillus pumilus SAFR-032.</title>
        <authorList>
            <person name="Gioia J."/>
            <person name="Yerrapragada S."/>
            <person name="Qin X."/>
            <person name="Jiang H."/>
            <person name="Igboeli O.C."/>
            <person name="Muzny D."/>
            <person name="Dugan-Rocha S."/>
            <person name="Ding Y."/>
            <person name="Hawes A."/>
            <person name="Liu W."/>
            <person name="Perez L."/>
            <person name="Kovar C."/>
            <person name="Dinh H."/>
            <person name="Lee S."/>
            <person name="Nazareth L."/>
            <person name="Blyth P."/>
            <person name="Holder M."/>
            <person name="Buhay C."/>
            <person name="Tirumalai M.R."/>
            <person name="Liu Y."/>
            <person name="Dasgupta I."/>
            <person name="Bokhetache L."/>
            <person name="Fujita M."/>
            <person name="Karouia F."/>
            <person name="Eswara Moorthy P."/>
            <person name="Siefert J."/>
            <person name="Uzman A."/>
            <person name="Buzumbo P."/>
            <person name="Verma A."/>
            <person name="Zwiya H."/>
            <person name="McWilliams B.D."/>
            <person name="Olowu A."/>
            <person name="Clinkenbeard K.D."/>
            <person name="Newcombe D."/>
            <person name="Golebiewski L."/>
            <person name="Petrosino J.F."/>
            <person name="Nicholson W.L."/>
            <person name="Fox G.E."/>
            <person name="Venkateswaran K."/>
            <person name="Highlander S.K."/>
            <person name="Weinstock G.M."/>
        </authorList>
    </citation>
    <scope>NUCLEOTIDE SEQUENCE [LARGE SCALE GENOMIC DNA]</scope>
    <source>
        <strain>SAFR-032</strain>
    </source>
</reference>
<protein>
    <recommendedName>
        <fullName evidence="1">Small ribosomal subunit protein uS13</fullName>
    </recommendedName>
    <alternativeName>
        <fullName evidence="3">30S ribosomal protein S13</fullName>
    </alternativeName>
</protein>
<comment type="function">
    <text evidence="1">Located at the top of the head of the 30S subunit, it contacts several helices of the 16S rRNA. In the 70S ribosome it contacts the 23S rRNA (bridge B1a) and protein L5 of the 50S subunit (bridge B1b), connecting the 2 subunits; these bridges are implicated in subunit movement. Contacts the tRNAs in the A and P-sites.</text>
</comment>
<comment type="subunit">
    <text evidence="1">Part of the 30S ribosomal subunit. Forms a loose heterodimer with protein S19. Forms two bridges to the 50S subunit in the 70S ribosome.</text>
</comment>
<comment type="similarity">
    <text evidence="1">Belongs to the universal ribosomal protein uS13 family.</text>
</comment>
<accession>A8F9B0</accession>
<sequence length="121" mass="13773">MARIAGVDIPRDKRVVISLTYVFGIGRTTAQQVLKEAGVSEDTRVRDLTEDELGKIRDIIDKLKVEGDLRREVSLNIKRLIEIGSYRGIRHRRGLPVRGQNTKNNARTRKGPRRTVANKKK</sequence>
<feature type="chain" id="PRO_1000067516" description="Small ribosomal subunit protein uS13">
    <location>
        <begin position="1"/>
        <end position="121"/>
    </location>
</feature>
<feature type="region of interest" description="Disordered" evidence="2">
    <location>
        <begin position="93"/>
        <end position="121"/>
    </location>
</feature>
<feature type="compositionally biased region" description="Basic residues" evidence="2">
    <location>
        <begin position="106"/>
        <end position="121"/>
    </location>
</feature>